<accession>C1EVW0</accession>
<evidence type="ECO:0000255" key="1">
    <source>
        <dbReference type="HAMAP-Rule" id="MF_01548"/>
    </source>
</evidence>
<protein>
    <recommendedName>
        <fullName evidence="1">UPF0354 protein BCA_4815</fullName>
    </recommendedName>
</protein>
<feature type="chain" id="PRO_1000185306" description="UPF0354 protein BCA_4815">
    <location>
        <begin position="1"/>
        <end position="270"/>
    </location>
</feature>
<sequence length="270" mass="31032">MKMTSKKMKDELMKKLSRPEWDFQYDSEKEVLRIEQKDSKKGINVSLPGVVAKWEVNKEKAIEEVAYYVQEALIAMHKEENSTAKILPVIRSTSFPKQAEEGNPFIMTDHTAETRIYYALDSNKTYRLIDERLLQKLGLTEQQVREMALFNARSLGYEFKQDTVAGNTFYFLNTNDGYDATRILNESLLQSMREKISGDMVVAVPHQDVLIIADIVNEIGYDIIAQMTMKFFAEGHVPITSLSFVYEDGDFEPIFILAKNRKKTDGKEKG</sequence>
<reference key="1">
    <citation type="submission" date="2009-02" db="EMBL/GenBank/DDBJ databases">
        <title>Genome sequence of Bacillus cereus 03BB102.</title>
        <authorList>
            <person name="Dodson R.J."/>
            <person name="Jackson P."/>
            <person name="Munk A.C."/>
            <person name="Brettin T."/>
            <person name="Bruce D."/>
            <person name="Detter C."/>
            <person name="Tapia R."/>
            <person name="Han C."/>
            <person name="Sutton G."/>
            <person name="Sims D."/>
        </authorList>
    </citation>
    <scope>NUCLEOTIDE SEQUENCE [LARGE SCALE GENOMIC DNA]</scope>
    <source>
        <strain>03BB102</strain>
    </source>
</reference>
<name>Y4815_BACC3</name>
<comment type="similarity">
    <text evidence="1">Belongs to the UPF0354 family.</text>
</comment>
<gene>
    <name type="ordered locus">BCA_4815</name>
</gene>
<organism>
    <name type="scientific">Bacillus cereus (strain 03BB102)</name>
    <dbReference type="NCBI Taxonomy" id="572264"/>
    <lineage>
        <taxon>Bacteria</taxon>
        <taxon>Bacillati</taxon>
        <taxon>Bacillota</taxon>
        <taxon>Bacilli</taxon>
        <taxon>Bacillales</taxon>
        <taxon>Bacillaceae</taxon>
        <taxon>Bacillus</taxon>
        <taxon>Bacillus cereus group</taxon>
    </lineage>
</organism>
<proteinExistence type="inferred from homology"/>
<dbReference type="EMBL" id="CP001407">
    <property type="protein sequence ID" value="ACO28118.1"/>
    <property type="molecule type" value="Genomic_DNA"/>
</dbReference>
<dbReference type="RefSeq" id="WP_000784608.1">
    <property type="nucleotide sequence ID" value="NZ_CP009318.1"/>
</dbReference>
<dbReference type="KEGG" id="bcx:BCA_4815"/>
<dbReference type="PATRIC" id="fig|572264.18.peg.4765"/>
<dbReference type="Proteomes" id="UP000002210">
    <property type="component" value="Chromosome"/>
</dbReference>
<dbReference type="HAMAP" id="MF_01548">
    <property type="entry name" value="UPF0354"/>
    <property type="match status" value="1"/>
</dbReference>
<dbReference type="InterPro" id="IPR010838">
    <property type="entry name" value="DUF1444"/>
</dbReference>
<dbReference type="NCBIfam" id="NF010189">
    <property type="entry name" value="PRK13668.1"/>
    <property type="match status" value="1"/>
</dbReference>
<dbReference type="Pfam" id="PF07285">
    <property type="entry name" value="DUF1444"/>
    <property type="match status" value="1"/>
</dbReference>
<dbReference type="PIRSF" id="PIRSF012562">
    <property type="entry name" value="UCP012562"/>
    <property type="match status" value="1"/>
</dbReference>